<organism>
    <name type="scientific">Arabidopsis thaliana</name>
    <name type="common">Mouse-ear cress</name>
    <dbReference type="NCBI Taxonomy" id="3702"/>
    <lineage>
        <taxon>Eukaryota</taxon>
        <taxon>Viridiplantae</taxon>
        <taxon>Streptophyta</taxon>
        <taxon>Embryophyta</taxon>
        <taxon>Tracheophyta</taxon>
        <taxon>Spermatophyta</taxon>
        <taxon>Magnoliopsida</taxon>
        <taxon>eudicotyledons</taxon>
        <taxon>Gunneridae</taxon>
        <taxon>Pentapetalae</taxon>
        <taxon>rosids</taxon>
        <taxon>malvids</taxon>
        <taxon>Brassicales</taxon>
        <taxon>Brassicaceae</taxon>
        <taxon>Camelineae</taxon>
        <taxon>Arabidopsis</taxon>
    </lineage>
</organism>
<proteinExistence type="evidence at transcript level"/>
<reference key="1">
    <citation type="journal article" date="1998" name="Biochim. Biophys. Acta">
        <title>An evolutionary conserved group of plant GSK-3/shaggy-like protein kinase genes preferentially expressed in developing pollen.</title>
        <authorList>
            <person name="Tichtinsky G."/>
            <person name="Tavares R."/>
            <person name="Takvorian A."/>
            <person name="Schwebel-Dugue N."/>
            <person name="Twell D."/>
            <person name="Kreis M."/>
        </authorList>
    </citation>
    <scope>NUCLEOTIDE SEQUENCE [GENOMIC DNA / MRNA]</scope>
    <source>
        <strain>cv. Columbia</strain>
        <tissue>Pollen</tissue>
    </source>
</reference>
<reference key="2">
    <citation type="journal article" date="2000" name="Plant Mol. Biol.">
        <title>Organization and structural evolution of four multigene families in Arabidopsis thaliana: AtLCAD, AtLGT, AtMYST and AtHD-GL2.</title>
        <authorList>
            <person name="Tavares R."/>
            <person name="Aubourg S."/>
            <person name="Lecharny A."/>
            <person name="Kreis M."/>
        </authorList>
    </citation>
    <scope>NUCLEOTIDE SEQUENCE [GENOMIC DNA]</scope>
    <source>
        <strain>cv. Columbia</strain>
    </source>
</reference>
<reference key="3">
    <citation type="journal article" date="2000" name="Nature">
        <title>Sequence and analysis of chromosome 3 of the plant Arabidopsis thaliana.</title>
        <authorList>
            <person name="Salanoubat M."/>
            <person name="Lemcke K."/>
            <person name="Rieger M."/>
            <person name="Ansorge W."/>
            <person name="Unseld M."/>
            <person name="Fartmann B."/>
            <person name="Valle G."/>
            <person name="Bloecker H."/>
            <person name="Perez-Alonso M."/>
            <person name="Obermaier B."/>
            <person name="Delseny M."/>
            <person name="Boutry M."/>
            <person name="Grivell L.A."/>
            <person name="Mache R."/>
            <person name="Puigdomenech P."/>
            <person name="De Simone V."/>
            <person name="Choisne N."/>
            <person name="Artiguenave F."/>
            <person name="Robert C."/>
            <person name="Brottier P."/>
            <person name="Wincker P."/>
            <person name="Cattolico L."/>
            <person name="Weissenbach J."/>
            <person name="Saurin W."/>
            <person name="Quetier F."/>
            <person name="Schaefer M."/>
            <person name="Mueller-Auer S."/>
            <person name="Gabel C."/>
            <person name="Fuchs M."/>
            <person name="Benes V."/>
            <person name="Wurmbach E."/>
            <person name="Drzonek H."/>
            <person name="Erfle H."/>
            <person name="Jordan N."/>
            <person name="Bangert S."/>
            <person name="Wiedelmann R."/>
            <person name="Kranz H."/>
            <person name="Voss H."/>
            <person name="Holland R."/>
            <person name="Brandt P."/>
            <person name="Nyakatura G."/>
            <person name="Vezzi A."/>
            <person name="D'Angelo M."/>
            <person name="Pallavicini A."/>
            <person name="Toppo S."/>
            <person name="Simionati B."/>
            <person name="Conrad A."/>
            <person name="Hornischer K."/>
            <person name="Kauer G."/>
            <person name="Loehnert T.-H."/>
            <person name="Nordsiek G."/>
            <person name="Reichelt J."/>
            <person name="Scharfe M."/>
            <person name="Schoen O."/>
            <person name="Bargues M."/>
            <person name="Terol J."/>
            <person name="Climent J."/>
            <person name="Navarro P."/>
            <person name="Collado C."/>
            <person name="Perez-Perez A."/>
            <person name="Ottenwaelder B."/>
            <person name="Duchemin D."/>
            <person name="Cooke R."/>
            <person name="Laudie M."/>
            <person name="Berger-Llauro C."/>
            <person name="Purnelle B."/>
            <person name="Masuy D."/>
            <person name="de Haan M."/>
            <person name="Maarse A.C."/>
            <person name="Alcaraz J.-P."/>
            <person name="Cottet A."/>
            <person name="Casacuberta E."/>
            <person name="Monfort A."/>
            <person name="Argiriou A."/>
            <person name="Flores M."/>
            <person name="Liguori R."/>
            <person name="Vitale D."/>
            <person name="Mannhaupt G."/>
            <person name="Haase D."/>
            <person name="Schoof H."/>
            <person name="Rudd S."/>
            <person name="Zaccaria P."/>
            <person name="Mewes H.-W."/>
            <person name="Mayer K.F.X."/>
            <person name="Kaul S."/>
            <person name="Town C.D."/>
            <person name="Koo H.L."/>
            <person name="Tallon L.J."/>
            <person name="Jenkins J."/>
            <person name="Rooney T."/>
            <person name="Rizzo M."/>
            <person name="Walts A."/>
            <person name="Utterback T."/>
            <person name="Fujii C.Y."/>
            <person name="Shea T.P."/>
            <person name="Creasy T.H."/>
            <person name="Haas B."/>
            <person name="Maiti R."/>
            <person name="Wu D."/>
            <person name="Peterson J."/>
            <person name="Van Aken S."/>
            <person name="Pai G."/>
            <person name="Militscher J."/>
            <person name="Sellers P."/>
            <person name="Gill J.E."/>
            <person name="Feldblyum T.V."/>
            <person name="Preuss D."/>
            <person name="Lin X."/>
            <person name="Nierman W.C."/>
            <person name="Salzberg S.L."/>
            <person name="White O."/>
            <person name="Venter J.C."/>
            <person name="Fraser C.M."/>
            <person name="Kaneko T."/>
            <person name="Nakamura Y."/>
            <person name="Sato S."/>
            <person name="Kato T."/>
            <person name="Asamizu E."/>
            <person name="Sasamoto S."/>
            <person name="Kimura T."/>
            <person name="Idesawa K."/>
            <person name="Kawashima K."/>
            <person name="Kishida Y."/>
            <person name="Kiyokawa C."/>
            <person name="Kohara M."/>
            <person name="Matsumoto M."/>
            <person name="Matsuno A."/>
            <person name="Muraki A."/>
            <person name="Nakayama S."/>
            <person name="Nakazaki N."/>
            <person name="Shinpo S."/>
            <person name="Takeuchi C."/>
            <person name="Wada T."/>
            <person name="Watanabe A."/>
            <person name="Yamada M."/>
            <person name="Yasuda M."/>
            <person name="Tabata S."/>
        </authorList>
    </citation>
    <scope>NUCLEOTIDE SEQUENCE [LARGE SCALE GENOMIC DNA]</scope>
    <source>
        <strain>cv. Columbia</strain>
    </source>
</reference>
<reference key="4">
    <citation type="journal article" date="2017" name="Plant J.">
        <title>Araport11: a complete reannotation of the Arabidopsis thaliana reference genome.</title>
        <authorList>
            <person name="Cheng C.Y."/>
            <person name="Krishnakumar V."/>
            <person name="Chan A.P."/>
            <person name="Thibaud-Nissen F."/>
            <person name="Schobel S."/>
            <person name="Town C.D."/>
        </authorList>
    </citation>
    <scope>GENOME REANNOTATION</scope>
    <source>
        <strain>cv. Columbia</strain>
    </source>
</reference>
<protein>
    <recommendedName>
        <fullName evidence="6">Shaggy-related protein kinase beta</fullName>
        <ecNumber>2.7.11.1</ecNumber>
    </recommendedName>
    <alternativeName>
        <fullName evidence="6">ASK-beta</fullName>
    </alternativeName>
</protein>
<evidence type="ECO:0000250" key="1"/>
<evidence type="ECO:0000250" key="2">
    <source>
        <dbReference type="UniProtKB" id="Q39011"/>
    </source>
</evidence>
<evidence type="ECO:0000255" key="3">
    <source>
        <dbReference type="PROSITE-ProRule" id="PRU00159"/>
    </source>
</evidence>
<evidence type="ECO:0000255" key="4">
    <source>
        <dbReference type="PROSITE-ProRule" id="PRU10027"/>
    </source>
</evidence>
<evidence type="ECO:0000256" key="5">
    <source>
        <dbReference type="SAM" id="MobiDB-lite"/>
    </source>
</evidence>
<evidence type="ECO:0000303" key="6">
    <source>
    </source>
</evidence>
<evidence type="ECO:0000305" key="7"/>
<evidence type="ECO:0000312" key="8">
    <source>
        <dbReference type="Araport" id="AT3G61160"/>
    </source>
</evidence>
<evidence type="ECO:0000312" key="9">
    <source>
        <dbReference type="EMBL" id="CAB71046.1"/>
    </source>
</evidence>
<dbReference type="EC" id="2.7.11.1"/>
<dbReference type="EMBL" id="AJ002280">
    <property type="protein sequence ID" value="CAA05292.1"/>
    <property type="molecule type" value="mRNA"/>
</dbReference>
<dbReference type="EMBL" id="AJ224338">
    <property type="protein sequence ID" value="CAA11903.2"/>
    <property type="molecule type" value="Genomic_DNA"/>
</dbReference>
<dbReference type="EMBL" id="AL137898">
    <property type="protein sequence ID" value="CAB71046.1"/>
    <property type="molecule type" value="Genomic_DNA"/>
</dbReference>
<dbReference type="EMBL" id="CP002686">
    <property type="protein sequence ID" value="AEE80162.1"/>
    <property type="molecule type" value="Genomic_DNA"/>
</dbReference>
<dbReference type="PIR" id="T47908">
    <property type="entry name" value="T47908"/>
</dbReference>
<dbReference type="RefSeq" id="NP_191675.1">
    <molecule id="O23145-1"/>
    <property type="nucleotide sequence ID" value="NM_115980.4"/>
</dbReference>
<dbReference type="SMR" id="O23145"/>
<dbReference type="BioGRID" id="10602">
    <property type="interactions" value="7"/>
</dbReference>
<dbReference type="FunCoup" id="O23145">
    <property type="interactions" value="2383"/>
</dbReference>
<dbReference type="IntAct" id="O23145">
    <property type="interactions" value="7"/>
</dbReference>
<dbReference type="STRING" id="3702.O23145"/>
<dbReference type="iPTMnet" id="O23145"/>
<dbReference type="PaxDb" id="3702-AT3G61160.2"/>
<dbReference type="EnsemblPlants" id="AT3G61160.1">
    <molecule id="O23145-1"/>
    <property type="protein sequence ID" value="AT3G61160.1"/>
    <property type="gene ID" value="AT3G61160"/>
</dbReference>
<dbReference type="GeneID" id="825288"/>
<dbReference type="Gramene" id="AT3G61160.1">
    <molecule id="O23145-1"/>
    <property type="protein sequence ID" value="AT3G61160.1"/>
    <property type="gene ID" value="AT3G61160"/>
</dbReference>
<dbReference type="KEGG" id="ath:AT3G61160"/>
<dbReference type="Araport" id="AT3G61160"/>
<dbReference type="TAIR" id="AT3G61160"/>
<dbReference type="eggNOG" id="KOG0658">
    <property type="taxonomic scope" value="Eukaryota"/>
</dbReference>
<dbReference type="HOGENOM" id="CLU_000288_181_20_1"/>
<dbReference type="InParanoid" id="O23145"/>
<dbReference type="OrthoDB" id="272141at2759"/>
<dbReference type="PhylomeDB" id="O23145"/>
<dbReference type="BRENDA" id="2.7.11.26">
    <property type="organism ID" value="399"/>
</dbReference>
<dbReference type="PRO" id="PR:O23145"/>
<dbReference type="Proteomes" id="UP000006548">
    <property type="component" value="Chromosome 3"/>
</dbReference>
<dbReference type="ExpressionAtlas" id="O23145">
    <property type="expression patterns" value="baseline and differential"/>
</dbReference>
<dbReference type="GO" id="GO:0005524">
    <property type="term" value="F:ATP binding"/>
    <property type="evidence" value="ECO:0007669"/>
    <property type="project" value="UniProtKB-KW"/>
</dbReference>
<dbReference type="GO" id="GO:0106310">
    <property type="term" value="F:protein serine kinase activity"/>
    <property type="evidence" value="ECO:0007669"/>
    <property type="project" value="RHEA"/>
</dbReference>
<dbReference type="GO" id="GO:0004674">
    <property type="term" value="F:protein serine/threonine kinase activity"/>
    <property type="evidence" value="ECO:0007669"/>
    <property type="project" value="UniProtKB-KW"/>
</dbReference>
<dbReference type="CDD" id="cd14137">
    <property type="entry name" value="STKc_GSK3"/>
    <property type="match status" value="1"/>
</dbReference>
<dbReference type="FunFam" id="3.30.200.20:FF:000009">
    <property type="entry name" value="Glycogen synthase kinase-3 beta"/>
    <property type="match status" value="1"/>
</dbReference>
<dbReference type="FunFam" id="1.10.510.10:FF:000082">
    <property type="entry name" value="Shaggy-related protein kinase kappa"/>
    <property type="match status" value="1"/>
</dbReference>
<dbReference type="Gene3D" id="3.30.200.20">
    <property type="entry name" value="Phosphorylase Kinase, domain 1"/>
    <property type="match status" value="1"/>
</dbReference>
<dbReference type="Gene3D" id="1.10.510.10">
    <property type="entry name" value="Transferase(Phosphotransferase) domain 1"/>
    <property type="match status" value="1"/>
</dbReference>
<dbReference type="InterPro" id="IPR050591">
    <property type="entry name" value="GSK-3"/>
</dbReference>
<dbReference type="InterPro" id="IPR011009">
    <property type="entry name" value="Kinase-like_dom_sf"/>
</dbReference>
<dbReference type="InterPro" id="IPR000719">
    <property type="entry name" value="Prot_kinase_dom"/>
</dbReference>
<dbReference type="InterPro" id="IPR017441">
    <property type="entry name" value="Protein_kinase_ATP_BS"/>
</dbReference>
<dbReference type="InterPro" id="IPR008271">
    <property type="entry name" value="Ser/Thr_kinase_AS"/>
</dbReference>
<dbReference type="InterPro" id="IPR039192">
    <property type="entry name" value="STKc_GSK3"/>
</dbReference>
<dbReference type="PANTHER" id="PTHR24057">
    <property type="entry name" value="GLYCOGEN SYNTHASE KINASE-3 ALPHA"/>
    <property type="match status" value="1"/>
</dbReference>
<dbReference type="PANTHER" id="PTHR24057:SF51">
    <property type="entry name" value="SHAGGY-RELATED PROTEIN KINASE BETA"/>
    <property type="match status" value="1"/>
</dbReference>
<dbReference type="Pfam" id="PF00069">
    <property type="entry name" value="Pkinase"/>
    <property type="match status" value="1"/>
</dbReference>
<dbReference type="SMART" id="SM00220">
    <property type="entry name" value="S_TKc"/>
    <property type="match status" value="1"/>
</dbReference>
<dbReference type="SUPFAM" id="SSF56112">
    <property type="entry name" value="Protein kinase-like (PK-like)"/>
    <property type="match status" value="1"/>
</dbReference>
<dbReference type="PROSITE" id="PS00107">
    <property type="entry name" value="PROTEIN_KINASE_ATP"/>
    <property type="match status" value="1"/>
</dbReference>
<dbReference type="PROSITE" id="PS50011">
    <property type="entry name" value="PROTEIN_KINASE_DOM"/>
    <property type="match status" value="1"/>
</dbReference>
<dbReference type="PROSITE" id="PS00108">
    <property type="entry name" value="PROTEIN_KINASE_ST"/>
    <property type="match status" value="1"/>
</dbReference>
<accession>O23145</accession>
<accession>O81710</accession>
<sequence>MNVVRRLTSIASGRNFVSSDNVGETETPRSKPNQNREETESTETTSYEKDSVSSSENSDHLPKEIREDMDCGIIKGNGTESGRIITTKKKGLNDQKDKTISYRAEHVIGTGSFGVVFQAKCLETEEKVAIKKVLQDKRYKNRELQIMRMLDHPNVVELKHSFFSTTEKDELYLNLVLEYVPETIYRASRSYTKMNQHMPLIYIQLYTYQICRAMNYLHQVVGVCHRDIKPQNLLVNNVTHEVKICDFGSAKMLIPGEPNISYICSRYYRAPELIFGATEYTSAIDMWSVGCVMAELFLGHPLFPGETSVDQLVEIIKILGTPAREEIKNMNPRYNDFKFPQIKAQPWHKIFRRQVSPEAMDLASRLLQYSPNLRCTALEACAHPFFDDLRDPRASLPNGRALPPLFDFTAQELAGASVELRHRLIPEHARK</sequence>
<name>KSG2_ARATH</name>
<gene>
    <name evidence="6" type="primary">ASK2</name>
    <name evidence="8" type="ordered locus">At3g61160</name>
    <name evidence="9" type="ORF">T20K12.60</name>
</gene>
<feature type="chain" id="PRO_0000086217" description="Shaggy-related protein kinase beta">
    <location>
        <begin position="1"/>
        <end position="431"/>
    </location>
</feature>
<feature type="domain" description="Protein kinase" evidence="3">
    <location>
        <begin position="102"/>
        <end position="386"/>
    </location>
</feature>
<feature type="region of interest" description="Disordered" evidence="5">
    <location>
        <begin position="12"/>
        <end position="65"/>
    </location>
</feature>
<feature type="compositionally biased region" description="Polar residues" evidence="5">
    <location>
        <begin position="12"/>
        <end position="24"/>
    </location>
</feature>
<feature type="compositionally biased region" description="Basic and acidic residues" evidence="5">
    <location>
        <begin position="26"/>
        <end position="39"/>
    </location>
</feature>
<feature type="compositionally biased region" description="Basic and acidic residues" evidence="5">
    <location>
        <begin position="46"/>
        <end position="65"/>
    </location>
</feature>
<feature type="active site" description="Proton acceptor" evidence="3 4">
    <location>
        <position position="227"/>
    </location>
</feature>
<feature type="binding site" evidence="3">
    <location>
        <begin position="108"/>
        <end position="116"/>
    </location>
    <ligand>
        <name>ATP</name>
        <dbReference type="ChEBI" id="CHEBI:30616"/>
    </ligand>
</feature>
<feature type="binding site" evidence="3">
    <location>
        <position position="131"/>
    </location>
    <ligand>
        <name>ATP</name>
        <dbReference type="ChEBI" id="CHEBI:30616"/>
    </ligand>
</feature>
<feature type="modified residue" description="Phosphotyrosine" evidence="2">
    <location>
        <position position="262"/>
    </location>
</feature>
<comment type="function">
    <text evidence="1">May mediate extracellular signals to regulate transcription in differentiating cells.</text>
</comment>
<comment type="catalytic activity">
    <reaction>
        <text>L-seryl-[protein] + ATP = O-phospho-L-seryl-[protein] + ADP + H(+)</text>
        <dbReference type="Rhea" id="RHEA:17989"/>
        <dbReference type="Rhea" id="RHEA-COMP:9863"/>
        <dbReference type="Rhea" id="RHEA-COMP:11604"/>
        <dbReference type="ChEBI" id="CHEBI:15378"/>
        <dbReference type="ChEBI" id="CHEBI:29999"/>
        <dbReference type="ChEBI" id="CHEBI:30616"/>
        <dbReference type="ChEBI" id="CHEBI:83421"/>
        <dbReference type="ChEBI" id="CHEBI:456216"/>
        <dbReference type="EC" id="2.7.11.1"/>
    </reaction>
</comment>
<comment type="catalytic activity">
    <reaction>
        <text>L-threonyl-[protein] + ATP = O-phospho-L-threonyl-[protein] + ADP + H(+)</text>
        <dbReference type="Rhea" id="RHEA:46608"/>
        <dbReference type="Rhea" id="RHEA-COMP:11060"/>
        <dbReference type="Rhea" id="RHEA-COMP:11605"/>
        <dbReference type="ChEBI" id="CHEBI:15378"/>
        <dbReference type="ChEBI" id="CHEBI:30013"/>
        <dbReference type="ChEBI" id="CHEBI:30616"/>
        <dbReference type="ChEBI" id="CHEBI:61977"/>
        <dbReference type="ChEBI" id="CHEBI:456216"/>
        <dbReference type="EC" id="2.7.11.1"/>
    </reaction>
</comment>
<comment type="alternative products">
    <event type="alternative splicing"/>
    <isoform>
        <id>O23145-1</id>
        <name>1</name>
        <sequence type="displayed"/>
    </isoform>
    <text>A number of isoforms are produced. According to EST sequences.</text>
</comment>
<comment type="PTM">
    <text evidence="1">Autophosphorylated mainly on threonine and serine residues.</text>
</comment>
<comment type="similarity">
    <text evidence="7">Belongs to the protein kinase superfamily. CMGC Ser/Thr protein kinase family. GSK-3 subfamily.</text>
</comment>
<keyword id="KW-0025">Alternative splicing</keyword>
<keyword id="KW-0067">ATP-binding</keyword>
<keyword id="KW-0418">Kinase</keyword>
<keyword id="KW-0547">Nucleotide-binding</keyword>
<keyword id="KW-0597">Phosphoprotein</keyword>
<keyword id="KW-1185">Reference proteome</keyword>
<keyword id="KW-0723">Serine/threonine-protein kinase</keyword>
<keyword id="KW-0808">Transferase</keyword>